<evidence type="ECO:0000250" key="1"/>
<evidence type="ECO:0000255" key="2"/>
<evidence type="ECO:0000255" key="3">
    <source>
        <dbReference type="PROSITE-ProRule" id="PRU01240"/>
    </source>
</evidence>
<evidence type="ECO:0000256" key="4">
    <source>
        <dbReference type="SAM" id="MobiDB-lite"/>
    </source>
</evidence>
<evidence type="ECO:0000305" key="5"/>
<name>PEPC_ASPNG</name>
<sequence>MKGILGLSLLPLLTAASPVFVDSIHNEAAPILSATNAKEVPDSYIVVFKKHVTSELASAHHSWVQDIHDSQSERTELKKRSLFGLGDEVYLGLKNTFDIAGSLIGYSGHFHEDVIEQVRRHPDVDYIERDSEVHTMEGATEKNAPWGLARISHRDSLTFGNFNKYLYASEGGEGVDAYTIDTGINVDHVDFEGRATWGKTIPTNDEDLDGNGHGTHCSGTMAGKKYGVAKKANLYAVKVLRSSGSGTMSDVVSGVEYAVQAHIKKAKDAKNGKVKGFKGSVANMSLGGGKSKTLEDAVNAGVEAGLHFAVAAGNDNADACNYSPAAAEKAITVGASTLADERAYFSNYGECTDIFAPGLNILSTWIGSNYATNIISGTSMASPHIAGLLAYFVSLQPSSDSAFAVEELTPAKLKKDIIAIATEGALTDIPSNTPNVSHAAVGIYKRNELTQKFSSLPGTVVVPRTTPTSLAAVATRSPLPRTASRTVLRVSFTRPKSCSPRSLVPSTARSRMPSSHRSELVLSRRRSEDLVFF</sequence>
<keyword id="KW-1015">Disulfide bond</keyword>
<keyword id="KW-0325">Glycoprotein</keyword>
<keyword id="KW-0378">Hydrolase</keyword>
<keyword id="KW-0645">Protease</keyword>
<keyword id="KW-0720">Serine protease</keyword>
<keyword id="KW-0732">Signal</keyword>
<keyword id="KW-0865">Zymogen</keyword>
<protein>
    <recommendedName>
        <fullName>Subtilisin-like serine protease pepC</fullName>
        <ecNumber>3.4.21.-</ecNumber>
    </recommendedName>
</protein>
<gene>
    <name type="primary">pepC</name>
</gene>
<feature type="signal peptide" evidence="2">
    <location>
        <begin position="1"/>
        <end position="16"/>
    </location>
</feature>
<feature type="propeptide" id="PRO_0000027126" evidence="2">
    <location>
        <begin position="17"/>
        <end status="unknown"/>
    </location>
</feature>
<feature type="chain" id="PRO_0000027127" description="Subtilisin-like serine protease pepC">
    <location>
        <begin status="unknown"/>
        <end position="533"/>
    </location>
</feature>
<feature type="domain" description="Inhibitor I9" evidence="2">
    <location>
        <begin position="43"/>
        <end position="136"/>
    </location>
</feature>
<feature type="domain" description="Peptidase S8" evidence="3">
    <location>
        <begin position="145"/>
        <end position="450"/>
    </location>
</feature>
<feature type="region of interest" description="Disordered" evidence="4">
    <location>
        <begin position="496"/>
        <end position="519"/>
    </location>
</feature>
<feature type="compositionally biased region" description="Polar residues" evidence="4">
    <location>
        <begin position="496"/>
        <end position="513"/>
    </location>
</feature>
<feature type="active site" description="Charge relay system" evidence="3">
    <location>
        <position position="181"/>
    </location>
</feature>
<feature type="active site" description="Charge relay system" evidence="3">
    <location>
        <position position="213"/>
    </location>
</feature>
<feature type="active site" description="Charge relay system" evidence="3">
    <location>
        <position position="379"/>
    </location>
</feature>
<feature type="glycosylation site" description="N-linked (GlcNAc...) asparagine" evidence="2">
    <location>
        <position position="283"/>
    </location>
</feature>
<feature type="glycosylation site" description="N-linked (GlcNAc...) asparagine" evidence="2">
    <location>
        <position position="435"/>
    </location>
</feature>
<feature type="disulfide bond" evidence="1">
    <location>
        <begin position="320"/>
        <end position="351"/>
    </location>
</feature>
<proteinExistence type="inferred from homology"/>
<comment type="similarity">
    <text evidence="5">Belongs to the peptidase S8 family.</text>
</comment>
<accession>P33295</accession>
<reference key="1">
    <citation type="journal article" date="1993" name="Gene">
        <title>Cloning and characterisation of pepC, a gene encoding a serine protease from Aspergillus niger.</title>
        <authorList>
            <person name="Frederick G.D."/>
            <person name="Rombouts P."/>
            <person name="Buxton F.P."/>
        </authorList>
    </citation>
    <scope>NUCLEOTIDE SEQUENCE [GENOMIC DNA]</scope>
    <source>
        <strain>ATCC 9029 / NRRL 3 / CBS 120.49 / DSM 2466 / N400 / FGSC 732</strain>
    </source>
</reference>
<organism>
    <name type="scientific">Aspergillus niger</name>
    <dbReference type="NCBI Taxonomy" id="5061"/>
    <lineage>
        <taxon>Eukaryota</taxon>
        <taxon>Fungi</taxon>
        <taxon>Dikarya</taxon>
        <taxon>Ascomycota</taxon>
        <taxon>Pezizomycotina</taxon>
        <taxon>Eurotiomycetes</taxon>
        <taxon>Eurotiomycetidae</taxon>
        <taxon>Eurotiales</taxon>
        <taxon>Aspergillaceae</taxon>
        <taxon>Aspergillus</taxon>
        <taxon>Aspergillus subgen. Circumdati</taxon>
    </lineage>
</organism>
<dbReference type="EC" id="3.4.21.-"/>
<dbReference type="EMBL" id="M96758">
    <property type="protein sequence ID" value="AAA32702.1"/>
    <property type="molecule type" value="Genomic_DNA"/>
</dbReference>
<dbReference type="PIR" id="JU0146">
    <property type="entry name" value="JU0146"/>
</dbReference>
<dbReference type="SMR" id="P33295"/>
<dbReference type="Allergome" id="3130">
    <property type="allergen name" value="Asp n 18.0101"/>
</dbReference>
<dbReference type="Allergome" id="83">
    <property type="allergen name" value="Asp n 18"/>
</dbReference>
<dbReference type="GlyCosmos" id="P33295">
    <property type="glycosylation" value="2 sites, No reported glycans"/>
</dbReference>
<dbReference type="PaxDb" id="5061-CADANGAP00005548"/>
<dbReference type="VEuPathDB" id="FungiDB:An07g03880"/>
<dbReference type="VEuPathDB" id="FungiDB:ASPNIDRAFT2_1143957"/>
<dbReference type="VEuPathDB" id="FungiDB:ATCC64974_45980"/>
<dbReference type="VEuPathDB" id="FungiDB:M747DRAFT_312795"/>
<dbReference type="eggNOG" id="KOG1153">
    <property type="taxonomic scope" value="Eukaryota"/>
</dbReference>
<dbReference type="GO" id="GO:0004252">
    <property type="term" value="F:serine-type endopeptidase activity"/>
    <property type="evidence" value="ECO:0007669"/>
    <property type="project" value="InterPro"/>
</dbReference>
<dbReference type="GO" id="GO:0006508">
    <property type="term" value="P:proteolysis"/>
    <property type="evidence" value="ECO:0007669"/>
    <property type="project" value="UniProtKB-KW"/>
</dbReference>
<dbReference type="CDD" id="cd04077">
    <property type="entry name" value="Peptidases_S8_PCSK9_ProteinaseK_like"/>
    <property type="match status" value="1"/>
</dbReference>
<dbReference type="FunFam" id="3.30.70.80:FF:000006">
    <property type="entry name" value="Autophagic serine protease Alp2"/>
    <property type="match status" value="1"/>
</dbReference>
<dbReference type="FunFam" id="3.40.50.200:FF:000007">
    <property type="entry name" value="Subtilisin-like serine protease"/>
    <property type="match status" value="1"/>
</dbReference>
<dbReference type="Gene3D" id="3.30.70.80">
    <property type="entry name" value="Peptidase S8 propeptide/proteinase inhibitor I9"/>
    <property type="match status" value="1"/>
</dbReference>
<dbReference type="Gene3D" id="3.40.50.200">
    <property type="entry name" value="Peptidase S8/S53 domain"/>
    <property type="match status" value="1"/>
</dbReference>
<dbReference type="InterPro" id="IPR034193">
    <property type="entry name" value="PCSK9_ProteinaseK-like"/>
</dbReference>
<dbReference type="InterPro" id="IPR000209">
    <property type="entry name" value="Peptidase_S8/S53_dom"/>
</dbReference>
<dbReference type="InterPro" id="IPR036852">
    <property type="entry name" value="Peptidase_S8/S53_dom_sf"/>
</dbReference>
<dbReference type="InterPro" id="IPR022398">
    <property type="entry name" value="Peptidase_S8_His-AS"/>
</dbReference>
<dbReference type="InterPro" id="IPR023828">
    <property type="entry name" value="Peptidase_S8_Ser-AS"/>
</dbReference>
<dbReference type="InterPro" id="IPR050131">
    <property type="entry name" value="Peptidase_S8_subtilisin-like"/>
</dbReference>
<dbReference type="InterPro" id="IPR015500">
    <property type="entry name" value="Peptidase_S8_subtilisin-rel"/>
</dbReference>
<dbReference type="InterPro" id="IPR010259">
    <property type="entry name" value="S8pro/Inhibitor_I9"/>
</dbReference>
<dbReference type="InterPro" id="IPR037045">
    <property type="entry name" value="S8pro/Inhibitor_I9_sf"/>
</dbReference>
<dbReference type="PANTHER" id="PTHR43806:SF11">
    <property type="entry name" value="CEREVISIN-RELATED"/>
    <property type="match status" value="1"/>
</dbReference>
<dbReference type="PANTHER" id="PTHR43806">
    <property type="entry name" value="PEPTIDASE S8"/>
    <property type="match status" value="1"/>
</dbReference>
<dbReference type="Pfam" id="PF05922">
    <property type="entry name" value="Inhibitor_I9"/>
    <property type="match status" value="1"/>
</dbReference>
<dbReference type="Pfam" id="PF00082">
    <property type="entry name" value="Peptidase_S8"/>
    <property type="match status" value="1"/>
</dbReference>
<dbReference type="PRINTS" id="PR00723">
    <property type="entry name" value="SUBTILISIN"/>
</dbReference>
<dbReference type="SUPFAM" id="SSF54897">
    <property type="entry name" value="Protease propeptides/inhibitors"/>
    <property type="match status" value="1"/>
</dbReference>
<dbReference type="SUPFAM" id="SSF52743">
    <property type="entry name" value="Subtilisin-like"/>
    <property type="match status" value="1"/>
</dbReference>
<dbReference type="PROSITE" id="PS51892">
    <property type="entry name" value="SUBTILASE"/>
    <property type="match status" value="1"/>
</dbReference>
<dbReference type="PROSITE" id="PS00137">
    <property type="entry name" value="SUBTILASE_HIS"/>
    <property type="match status" value="1"/>
</dbReference>
<dbReference type="PROSITE" id="PS00138">
    <property type="entry name" value="SUBTILASE_SER"/>
    <property type="match status" value="1"/>
</dbReference>